<protein>
    <recommendedName>
        <fullName evidence="1">Shikimate kinase 2</fullName>
        <shortName evidence="1">SK 2</shortName>
        <ecNumber evidence="1">2.7.1.71</ecNumber>
    </recommendedName>
</protein>
<comment type="function">
    <text evidence="1">Catalyzes the specific phosphorylation of the 3-hydroxyl group of shikimic acid using ATP as a cosubstrate.</text>
</comment>
<comment type="catalytic activity">
    <reaction evidence="1">
        <text>shikimate + ATP = 3-phosphoshikimate + ADP + H(+)</text>
        <dbReference type="Rhea" id="RHEA:13121"/>
        <dbReference type="ChEBI" id="CHEBI:15378"/>
        <dbReference type="ChEBI" id="CHEBI:30616"/>
        <dbReference type="ChEBI" id="CHEBI:36208"/>
        <dbReference type="ChEBI" id="CHEBI:145989"/>
        <dbReference type="ChEBI" id="CHEBI:456216"/>
        <dbReference type="EC" id="2.7.1.71"/>
    </reaction>
</comment>
<comment type="cofactor">
    <cofactor evidence="1">
        <name>Mg(2+)</name>
        <dbReference type="ChEBI" id="CHEBI:18420"/>
    </cofactor>
    <text evidence="1">Binds 1 Mg(2+) ion per subunit.</text>
</comment>
<comment type="pathway">
    <text evidence="1">Metabolic intermediate biosynthesis; chorismate biosynthesis; chorismate from D-erythrose 4-phosphate and phosphoenolpyruvate: step 5/7.</text>
</comment>
<comment type="subunit">
    <text evidence="1">Monomer.</text>
</comment>
<comment type="subcellular location">
    <subcellularLocation>
        <location evidence="1">Cytoplasm</location>
    </subcellularLocation>
</comment>
<comment type="domain">
    <text evidence="1">The LID domain closes over the active site upon ATP binding.</text>
</comment>
<comment type="similarity">
    <text evidence="1">Belongs to the shikimate kinase family. AroL subfamily.</text>
</comment>
<keyword id="KW-0028">Amino-acid biosynthesis</keyword>
<keyword id="KW-0057">Aromatic amino acid biosynthesis</keyword>
<keyword id="KW-0067">ATP-binding</keyword>
<keyword id="KW-0963">Cytoplasm</keyword>
<keyword id="KW-0418">Kinase</keyword>
<keyword id="KW-0460">Magnesium</keyword>
<keyword id="KW-0479">Metal-binding</keyword>
<keyword id="KW-0547">Nucleotide-binding</keyword>
<keyword id="KW-1185">Reference proteome</keyword>
<keyword id="KW-0808">Transferase</keyword>
<name>AROL_ECO24</name>
<dbReference type="EC" id="2.7.1.71" evidence="1"/>
<dbReference type="EMBL" id="CP000800">
    <property type="protein sequence ID" value="ABV20210.1"/>
    <property type="molecule type" value="Genomic_DNA"/>
</dbReference>
<dbReference type="RefSeq" id="WP_000193393.1">
    <property type="nucleotide sequence ID" value="NC_009801.1"/>
</dbReference>
<dbReference type="SMR" id="A7ZID7"/>
<dbReference type="GeneID" id="93777073"/>
<dbReference type="KEGG" id="ecw:EcE24377A_0415"/>
<dbReference type="HOGENOM" id="CLU_057607_4_3_6"/>
<dbReference type="UniPathway" id="UPA00053">
    <property type="reaction ID" value="UER00088"/>
</dbReference>
<dbReference type="Proteomes" id="UP000001122">
    <property type="component" value="Chromosome"/>
</dbReference>
<dbReference type="GO" id="GO:0005829">
    <property type="term" value="C:cytosol"/>
    <property type="evidence" value="ECO:0007669"/>
    <property type="project" value="TreeGrafter"/>
</dbReference>
<dbReference type="GO" id="GO:0005524">
    <property type="term" value="F:ATP binding"/>
    <property type="evidence" value="ECO:0007669"/>
    <property type="project" value="UniProtKB-UniRule"/>
</dbReference>
<dbReference type="GO" id="GO:0000287">
    <property type="term" value="F:magnesium ion binding"/>
    <property type="evidence" value="ECO:0007669"/>
    <property type="project" value="UniProtKB-UniRule"/>
</dbReference>
<dbReference type="GO" id="GO:0004765">
    <property type="term" value="F:shikimate kinase activity"/>
    <property type="evidence" value="ECO:0007669"/>
    <property type="project" value="UniProtKB-UniRule"/>
</dbReference>
<dbReference type="GO" id="GO:0008652">
    <property type="term" value="P:amino acid biosynthetic process"/>
    <property type="evidence" value="ECO:0007669"/>
    <property type="project" value="UniProtKB-KW"/>
</dbReference>
<dbReference type="GO" id="GO:0009073">
    <property type="term" value="P:aromatic amino acid family biosynthetic process"/>
    <property type="evidence" value="ECO:0007669"/>
    <property type="project" value="UniProtKB-KW"/>
</dbReference>
<dbReference type="GO" id="GO:0009423">
    <property type="term" value="P:chorismate biosynthetic process"/>
    <property type="evidence" value="ECO:0007669"/>
    <property type="project" value="UniProtKB-UniRule"/>
</dbReference>
<dbReference type="CDD" id="cd00464">
    <property type="entry name" value="SK"/>
    <property type="match status" value="1"/>
</dbReference>
<dbReference type="FunFam" id="3.40.50.300:FF:000408">
    <property type="entry name" value="Shikimate kinase 2"/>
    <property type="match status" value="1"/>
</dbReference>
<dbReference type="Gene3D" id="3.40.50.300">
    <property type="entry name" value="P-loop containing nucleotide triphosphate hydrolases"/>
    <property type="match status" value="1"/>
</dbReference>
<dbReference type="HAMAP" id="MF_00109">
    <property type="entry name" value="Shikimate_kinase"/>
    <property type="match status" value="1"/>
</dbReference>
<dbReference type="HAMAP" id="MF_01269">
    <property type="entry name" value="Shikimate_kinase_2"/>
    <property type="match status" value="1"/>
</dbReference>
<dbReference type="InterPro" id="IPR027417">
    <property type="entry name" value="P-loop_NTPase"/>
</dbReference>
<dbReference type="InterPro" id="IPR031322">
    <property type="entry name" value="Shikimate/glucono_kinase"/>
</dbReference>
<dbReference type="InterPro" id="IPR000623">
    <property type="entry name" value="Shikimate_kinase/TSH1"/>
</dbReference>
<dbReference type="InterPro" id="IPR027544">
    <property type="entry name" value="Shikimate_kinase_2"/>
</dbReference>
<dbReference type="InterPro" id="IPR023000">
    <property type="entry name" value="Shikimate_kinase_CS"/>
</dbReference>
<dbReference type="NCBIfam" id="NF002988">
    <property type="entry name" value="PRK03731.1"/>
    <property type="match status" value="1"/>
</dbReference>
<dbReference type="PANTHER" id="PTHR21087">
    <property type="entry name" value="SHIKIMATE KINASE"/>
    <property type="match status" value="1"/>
</dbReference>
<dbReference type="PANTHER" id="PTHR21087:SF21">
    <property type="entry name" value="SHIKIMATE KINASE 2"/>
    <property type="match status" value="1"/>
</dbReference>
<dbReference type="Pfam" id="PF01202">
    <property type="entry name" value="SKI"/>
    <property type="match status" value="1"/>
</dbReference>
<dbReference type="PRINTS" id="PR01100">
    <property type="entry name" value="SHIKIMTKNASE"/>
</dbReference>
<dbReference type="SUPFAM" id="SSF52540">
    <property type="entry name" value="P-loop containing nucleoside triphosphate hydrolases"/>
    <property type="match status" value="1"/>
</dbReference>
<dbReference type="PROSITE" id="PS01128">
    <property type="entry name" value="SHIKIMATE_KINASE"/>
    <property type="match status" value="1"/>
</dbReference>
<feature type="chain" id="PRO_1000067327" description="Shikimate kinase 2">
    <location>
        <begin position="1"/>
        <end position="174"/>
    </location>
</feature>
<feature type="region of interest" description="LID domain">
    <location>
        <begin position="112"/>
        <end position="126"/>
    </location>
</feature>
<feature type="binding site" evidence="1">
    <location>
        <begin position="12"/>
        <end position="17"/>
    </location>
    <ligand>
        <name>ATP</name>
        <dbReference type="ChEBI" id="CHEBI:30616"/>
    </ligand>
</feature>
<feature type="binding site" evidence="1">
    <location>
        <position position="16"/>
    </location>
    <ligand>
        <name>Mg(2+)</name>
        <dbReference type="ChEBI" id="CHEBI:18420"/>
    </ligand>
</feature>
<feature type="binding site" evidence="1">
    <location>
        <position position="32"/>
    </location>
    <ligand>
        <name>Mg(2+)</name>
        <dbReference type="ChEBI" id="CHEBI:18420"/>
    </ligand>
</feature>
<feature type="binding site" evidence="1">
    <location>
        <position position="34"/>
    </location>
    <ligand>
        <name>substrate</name>
    </ligand>
</feature>
<feature type="binding site" evidence="1">
    <location>
        <position position="58"/>
    </location>
    <ligand>
        <name>substrate</name>
    </ligand>
</feature>
<feature type="binding site" evidence="1">
    <location>
        <position position="79"/>
    </location>
    <ligand>
        <name>substrate</name>
    </ligand>
</feature>
<feature type="binding site" evidence="1">
    <location>
        <position position="120"/>
    </location>
    <ligand>
        <name>ATP</name>
        <dbReference type="ChEBI" id="CHEBI:30616"/>
    </ligand>
</feature>
<feature type="binding site" evidence="1">
    <location>
        <position position="139"/>
    </location>
    <ligand>
        <name>substrate</name>
    </ligand>
</feature>
<sequence>MTQPLFLIGPRGCGKTTVGMALADSLNRRFVDTDQWLQSQLNMTVAEIVEREEWAGFRARETAALEAVTAPSTVIATGGGIILTEFNRHFMQNNGIVVYLCAPVSVLVNRLQAAPEEDLRPTLTGKPLSEEVQEVLEERDALYREVAHIIIDATNEPSQVISEIRSALAQTINC</sequence>
<organism>
    <name type="scientific">Escherichia coli O139:H28 (strain E24377A / ETEC)</name>
    <dbReference type="NCBI Taxonomy" id="331111"/>
    <lineage>
        <taxon>Bacteria</taxon>
        <taxon>Pseudomonadati</taxon>
        <taxon>Pseudomonadota</taxon>
        <taxon>Gammaproteobacteria</taxon>
        <taxon>Enterobacterales</taxon>
        <taxon>Enterobacteriaceae</taxon>
        <taxon>Escherichia</taxon>
    </lineage>
</organism>
<reference key="1">
    <citation type="journal article" date="2008" name="J. Bacteriol.">
        <title>The pangenome structure of Escherichia coli: comparative genomic analysis of E. coli commensal and pathogenic isolates.</title>
        <authorList>
            <person name="Rasko D.A."/>
            <person name="Rosovitz M.J."/>
            <person name="Myers G.S.A."/>
            <person name="Mongodin E.F."/>
            <person name="Fricke W.F."/>
            <person name="Gajer P."/>
            <person name="Crabtree J."/>
            <person name="Sebaihia M."/>
            <person name="Thomson N.R."/>
            <person name="Chaudhuri R."/>
            <person name="Henderson I.R."/>
            <person name="Sperandio V."/>
            <person name="Ravel J."/>
        </authorList>
    </citation>
    <scope>NUCLEOTIDE SEQUENCE [LARGE SCALE GENOMIC DNA]</scope>
    <source>
        <strain>E24377A / ETEC</strain>
    </source>
</reference>
<proteinExistence type="inferred from homology"/>
<gene>
    <name evidence="1" type="primary">aroL</name>
    <name type="ordered locus">EcE24377A_0415</name>
</gene>
<accession>A7ZID7</accession>
<evidence type="ECO:0000255" key="1">
    <source>
        <dbReference type="HAMAP-Rule" id="MF_01269"/>
    </source>
</evidence>